<dbReference type="EMBL" id="AAFI02000012">
    <property type="protein sequence ID" value="EAL70151.1"/>
    <property type="molecule type" value="Genomic_DNA"/>
</dbReference>
<dbReference type="RefSeq" id="XP_644084.1">
    <property type="nucleotide sequence ID" value="XM_638992.1"/>
</dbReference>
<dbReference type="SMR" id="Q86HL8"/>
<dbReference type="FunCoup" id="Q86HL8">
    <property type="interactions" value="2"/>
</dbReference>
<dbReference type="STRING" id="44689.Q86HL8"/>
<dbReference type="PaxDb" id="44689-DDB0237807"/>
<dbReference type="EnsemblProtists" id="EAL70151">
    <property type="protein sequence ID" value="EAL70151"/>
    <property type="gene ID" value="DDB_G0274517"/>
</dbReference>
<dbReference type="GeneID" id="8619513"/>
<dbReference type="KEGG" id="ddi:DDB_G0274517"/>
<dbReference type="dictyBase" id="DDB_G0274517">
    <property type="gene designation" value="osbE"/>
</dbReference>
<dbReference type="VEuPathDB" id="AmoebaDB:DDB_G0274517"/>
<dbReference type="eggNOG" id="KOG2210">
    <property type="taxonomic scope" value="Eukaryota"/>
</dbReference>
<dbReference type="HOGENOM" id="CLU_706815_0_0_1"/>
<dbReference type="InParanoid" id="Q86HL8"/>
<dbReference type="PhylomeDB" id="Q86HL8"/>
<dbReference type="Reactome" id="R-DDI-1482801">
    <property type="pathway name" value="Acyl chain remodelling of PS"/>
</dbReference>
<dbReference type="Reactome" id="R-DDI-9013407">
    <property type="pathway name" value="RHOH GTPase cycle"/>
</dbReference>
<dbReference type="PRO" id="PR:Q86HL8"/>
<dbReference type="Proteomes" id="UP000002195">
    <property type="component" value="Chromosome 2"/>
</dbReference>
<dbReference type="GO" id="GO:0005829">
    <property type="term" value="C:cytosol"/>
    <property type="evidence" value="ECO:0000318"/>
    <property type="project" value="GO_Central"/>
</dbReference>
<dbReference type="GO" id="GO:0016020">
    <property type="term" value="C:membrane"/>
    <property type="evidence" value="ECO:0000318"/>
    <property type="project" value="GO_Central"/>
</dbReference>
<dbReference type="GO" id="GO:0032934">
    <property type="term" value="F:sterol binding"/>
    <property type="evidence" value="ECO:0000318"/>
    <property type="project" value="GO_Central"/>
</dbReference>
<dbReference type="FunFam" id="3.30.70.3490:FF:000007">
    <property type="entry name" value="Oxysterol-binding protein-related protein 4B"/>
    <property type="match status" value="1"/>
</dbReference>
<dbReference type="FunFam" id="2.40.160.120:FF:000011">
    <property type="entry name" value="Oxysterol-binding protein-related protein 4C"/>
    <property type="match status" value="1"/>
</dbReference>
<dbReference type="Gene3D" id="2.40.160.120">
    <property type="match status" value="1"/>
</dbReference>
<dbReference type="Gene3D" id="3.30.70.3490">
    <property type="match status" value="1"/>
</dbReference>
<dbReference type="InterPro" id="IPR037239">
    <property type="entry name" value="OSBP_sf"/>
</dbReference>
<dbReference type="InterPro" id="IPR000648">
    <property type="entry name" value="Oxysterol-bd"/>
</dbReference>
<dbReference type="PANTHER" id="PTHR10972:SF78">
    <property type="entry name" value="OXYSTEROL-BINDING PROTEIN 1-RELATED"/>
    <property type="match status" value="1"/>
</dbReference>
<dbReference type="PANTHER" id="PTHR10972">
    <property type="entry name" value="OXYSTEROL-BINDING PROTEIN-RELATED"/>
    <property type="match status" value="1"/>
</dbReference>
<dbReference type="Pfam" id="PF01237">
    <property type="entry name" value="Oxysterol_BP"/>
    <property type="match status" value="1"/>
</dbReference>
<dbReference type="SUPFAM" id="SSF144000">
    <property type="entry name" value="Oxysterol-binding protein-like"/>
    <property type="match status" value="1"/>
</dbReference>
<comment type="similarity">
    <text evidence="1">Belongs to the OSBP family.</text>
</comment>
<sequence>MEKDSKVIEKEGNKGFTKSIISTVKNIKLGYGMDIYQMSTPASLIAPYSSLTYISDSFSKNFEILIKANSIENDLDRLLEIFKYITTIFIINNNACGKPIVPIVGETQRFKFSNKDEDGNEFNDSFHCAEHVQNSPFPLSVSSTVNEKEGIELCYNYAAKILFMATYFRINIDEAETFIKFNKFNETYNIILPTLYTRIFRGFSEYSGKLKIEPTKSNYYIDANFQSKPLIGGKYNYFEAYVSKKDTDEKIYKIFGQWDKEQQILDFENYQTDFFFKRPQQFYEKQLPNEILPTDSSVVWKGLIDAHNCGNNKLKLKEKTKVDEDQKLIENQRKKENINFKPKFFIKNKETDKWELDKFNKY</sequence>
<gene>
    <name type="primary">osbE</name>
    <name type="ORF">DDB_G0274517</name>
</gene>
<accession>Q86HL8</accession>
<accession>Q555I5</accession>
<proteinExistence type="inferred from homology"/>
<name>OSB5_DICDI</name>
<organism>
    <name type="scientific">Dictyostelium discoideum</name>
    <name type="common">Social amoeba</name>
    <dbReference type="NCBI Taxonomy" id="44689"/>
    <lineage>
        <taxon>Eukaryota</taxon>
        <taxon>Amoebozoa</taxon>
        <taxon>Evosea</taxon>
        <taxon>Eumycetozoa</taxon>
        <taxon>Dictyostelia</taxon>
        <taxon>Dictyosteliales</taxon>
        <taxon>Dictyosteliaceae</taxon>
        <taxon>Dictyostelium</taxon>
    </lineage>
</organism>
<protein>
    <recommendedName>
        <fullName>Oxysterol-binding protein 5</fullName>
        <shortName>OSBPe</shortName>
    </recommendedName>
</protein>
<keyword id="KW-1185">Reference proteome</keyword>
<evidence type="ECO:0000305" key="1"/>
<reference key="1">
    <citation type="journal article" date="2002" name="Nature">
        <title>Sequence and analysis of chromosome 2 of Dictyostelium discoideum.</title>
        <authorList>
            <person name="Gloeckner G."/>
            <person name="Eichinger L."/>
            <person name="Szafranski K."/>
            <person name="Pachebat J.A."/>
            <person name="Bankier A.T."/>
            <person name="Dear P.H."/>
            <person name="Lehmann R."/>
            <person name="Baumgart C."/>
            <person name="Parra G."/>
            <person name="Abril J.F."/>
            <person name="Guigo R."/>
            <person name="Kumpf K."/>
            <person name="Tunggal B."/>
            <person name="Cox E.C."/>
            <person name="Quail M.A."/>
            <person name="Platzer M."/>
            <person name="Rosenthal A."/>
            <person name="Noegel A.A."/>
        </authorList>
    </citation>
    <scope>NUCLEOTIDE SEQUENCE [LARGE SCALE GENOMIC DNA]</scope>
    <source>
        <strain>AX4</strain>
    </source>
</reference>
<reference key="2">
    <citation type="journal article" date="2005" name="Nature">
        <title>The genome of the social amoeba Dictyostelium discoideum.</title>
        <authorList>
            <person name="Eichinger L."/>
            <person name="Pachebat J.A."/>
            <person name="Gloeckner G."/>
            <person name="Rajandream M.A."/>
            <person name="Sucgang R."/>
            <person name="Berriman M."/>
            <person name="Song J."/>
            <person name="Olsen R."/>
            <person name="Szafranski K."/>
            <person name="Xu Q."/>
            <person name="Tunggal B."/>
            <person name="Kummerfeld S."/>
            <person name="Madera M."/>
            <person name="Konfortov B.A."/>
            <person name="Rivero F."/>
            <person name="Bankier A.T."/>
            <person name="Lehmann R."/>
            <person name="Hamlin N."/>
            <person name="Davies R."/>
            <person name="Gaudet P."/>
            <person name="Fey P."/>
            <person name="Pilcher K."/>
            <person name="Chen G."/>
            <person name="Saunders D."/>
            <person name="Sodergren E.J."/>
            <person name="Davis P."/>
            <person name="Kerhornou A."/>
            <person name="Nie X."/>
            <person name="Hall N."/>
            <person name="Anjard C."/>
            <person name="Hemphill L."/>
            <person name="Bason N."/>
            <person name="Farbrother P."/>
            <person name="Desany B."/>
            <person name="Just E."/>
            <person name="Morio T."/>
            <person name="Rost R."/>
            <person name="Churcher C.M."/>
            <person name="Cooper J."/>
            <person name="Haydock S."/>
            <person name="van Driessche N."/>
            <person name="Cronin A."/>
            <person name="Goodhead I."/>
            <person name="Muzny D.M."/>
            <person name="Mourier T."/>
            <person name="Pain A."/>
            <person name="Lu M."/>
            <person name="Harper D."/>
            <person name="Lindsay R."/>
            <person name="Hauser H."/>
            <person name="James K.D."/>
            <person name="Quiles M."/>
            <person name="Madan Babu M."/>
            <person name="Saito T."/>
            <person name="Buchrieser C."/>
            <person name="Wardroper A."/>
            <person name="Felder M."/>
            <person name="Thangavelu M."/>
            <person name="Johnson D."/>
            <person name="Knights A."/>
            <person name="Loulseged H."/>
            <person name="Mungall K.L."/>
            <person name="Oliver K."/>
            <person name="Price C."/>
            <person name="Quail M.A."/>
            <person name="Urushihara H."/>
            <person name="Hernandez J."/>
            <person name="Rabbinowitsch E."/>
            <person name="Steffen D."/>
            <person name="Sanders M."/>
            <person name="Ma J."/>
            <person name="Kohara Y."/>
            <person name="Sharp S."/>
            <person name="Simmonds M.N."/>
            <person name="Spiegler S."/>
            <person name="Tivey A."/>
            <person name="Sugano S."/>
            <person name="White B."/>
            <person name="Walker D."/>
            <person name="Woodward J.R."/>
            <person name="Winckler T."/>
            <person name="Tanaka Y."/>
            <person name="Shaulsky G."/>
            <person name="Schleicher M."/>
            <person name="Weinstock G.M."/>
            <person name="Rosenthal A."/>
            <person name="Cox E.C."/>
            <person name="Chisholm R.L."/>
            <person name="Gibbs R.A."/>
            <person name="Loomis W.F."/>
            <person name="Platzer M."/>
            <person name="Kay R.R."/>
            <person name="Williams J.G."/>
            <person name="Dear P.H."/>
            <person name="Noegel A.A."/>
            <person name="Barrell B.G."/>
            <person name="Kuspa A."/>
        </authorList>
    </citation>
    <scope>NUCLEOTIDE SEQUENCE [LARGE SCALE GENOMIC DNA]</scope>
    <source>
        <strain>AX4</strain>
    </source>
</reference>
<feature type="chain" id="PRO_0000328469" description="Oxysterol-binding protein 5">
    <location>
        <begin position="1"/>
        <end position="362"/>
    </location>
</feature>